<protein>
    <recommendedName>
        <fullName evidence="1">CTP synthase</fullName>
        <ecNumber evidence="1">6.3.4.2</ecNumber>
    </recommendedName>
    <alternativeName>
        <fullName evidence="1">Cytidine 5'-triphosphate synthase</fullName>
    </alternativeName>
    <alternativeName>
        <fullName evidence="1">Cytidine triphosphate synthetase</fullName>
        <shortName evidence="1">CTP synthetase</shortName>
        <shortName evidence="1">CTPS</shortName>
    </alternativeName>
    <alternativeName>
        <fullName evidence="1">UTP--ammonia ligase</fullName>
    </alternativeName>
</protein>
<sequence length="555" mass="60506">MQPTSTTTKHIFVTGGVASSLGKGLTASSLGALLKARGLRVTMQKLDPYLNVDPGTMNPFQHGEVFVTNDGAETDLDIGHYERFLDVDLDGSANVTTGQVYSQVIAKERRGEYLGDTVQVIPHITNEIKHRIRRMAAEDVDVVITEVGGTVGDIESLPFLETVRQVRHEVGRDNVFVVHISLLPYIGPSGELKTKPTQHSVAALRNIGIQPDAIVLRADREVPTAIKRKISLMCDVDETAVVACPDARSIYDIPKVLHTEGLDAYVVRKLDLPFRDVDWTTWDDLLDRVHNPDHEVTVALVGKYIDLPDAYLSVTEAIRAGGFANKARVKVKWVTSDDCRTAAGAAEHLGDVDAICIPGGFGERGVDGKVGAIRYARENKVPLLGLCLGLQCIVIEAARSLAEIPDANSTEFDAATSHPVISTMEEQLAYVEGAGDLGGTMRLGLYPAKLAEGSLVREAYDGQPYVEERHRHRYEVNNAYRSELEKKAGLVFSGTSPDNKLVEYVEYPRETHPYLVATQAHPELRSRPTRPHPLFAGLVKAAVARQVAAAKGADA</sequence>
<dbReference type="EC" id="6.3.4.2" evidence="1"/>
<dbReference type="EMBL" id="AP009493">
    <property type="protein sequence ID" value="BAG22550.1"/>
    <property type="molecule type" value="Genomic_DNA"/>
</dbReference>
<dbReference type="RefSeq" id="WP_003970026.1">
    <property type="nucleotide sequence ID" value="NC_010572.1"/>
</dbReference>
<dbReference type="SMR" id="B1W203"/>
<dbReference type="MEROPS" id="C26.964"/>
<dbReference type="KEGG" id="sgr:SGR_5721"/>
<dbReference type="eggNOG" id="COG0504">
    <property type="taxonomic scope" value="Bacteria"/>
</dbReference>
<dbReference type="HOGENOM" id="CLU_011675_5_0_11"/>
<dbReference type="UniPathway" id="UPA00159">
    <property type="reaction ID" value="UER00277"/>
</dbReference>
<dbReference type="Proteomes" id="UP000001685">
    <property type="component" value="Chromosome"/>
</dbReference>
<dbReference type="GO" id="GO:0005829">
    <property type="term" value="C:cytosol"/>
    <property type="evidence" value="ECO:0007669"/>
    <property type="project" value="TreeGrafter"/>
</dbReference>
<dbReference type="GO" id="GO:0005524">
    <property type="term" value="F:ATP binding"/>
    <property type="evidence" value="ECO:0007669"/>
    <property type="project" value="UniProtKB-KW"/>
</dbReference>
<dbReference type="GO" id="GO:0003883">
    <property type="term" value="F:CTP synthase activity"/>
    <property type="evidence" value="ECO:0007669"/>
    <property type="project" value="UniProtKB-UniRule"/>
</dbReference>
<dbReference type="GO" id="GO:0004359">
    <property type="term" value="F:glutaminase activity"/>
    <property type="evidence" value="ECO:0007669"/>
    <property type="project" value="RHEA"/>
</dbReference>
<dbReference type="GO" id="GO:0042802">
    <property type="term" value="F:identical protein binding"/>
    <property type="evidence" value="ECO:0007669"/>
    <property type="project" value="TreeGrafter"/>
</dbReference>
<dbReference type="GO" id="GO:0046872">
    <property type="term" value="F:metal ion binding"/>
    <property type="evidence" value="ECO:0007669"/>
    <property type="project" value="UniProtKB-KW"/>
</dbReference>
<dbReference type="GO" id="GO:0044210">
    <property type="term" value="P:'de novo' CTP biosynthetic process"/>
    <property type="evidence" value="ECO:0007669"/>
    <property type="project" value="UniProtKB-UniRule"/>
</dbReference>
<dbReference type="GO" id="GO:0019856">
    <property type="term" value="P:pyrimidine nucleobase biosynthetic process"/>
    <property type="evidence" value="ECO:0007669"/>
    <property type="project" value="TreeGrafter"/>
</dbReference>
<dbReference type="CDD" id="cd03113">
    <property type="entry name" value="CTPS_N"/>
    <property type="match status" value="1"/>
</dbReference>
<dbReference type="CDD" id="cd01746">
    <property type="entry name" value="GATase1_CTP_Synthase"/>
    <property type="match status" value="1"/>
</dbReference>
<dbReference type="FunFam" id="3.40.50.300:FF:000009">
    <property type="entry name" value="CTP synthase"/>
    <property type="match status" value="1"/>
</dbReference>
<dbReference type="FunFam" id="3.40.50.880:FF:000002">
    <property type="entry name" value="CTP synthase"/>
    <property type="match status" value="1"/>
</dbReference>
<dbReference type="Gene3D" id="3.40.50.880">
    <property type="match status" value="1"/>
</dbReference>
<dbReference type="Gene3D" id="3.40.50.300">
    <property type="entry name" value="P-loop containing nucleotide triphosphate hydrolases"/>
    <property type="match status" value="1"/>
</dbReference>
<dbReference type="HAMAP" id="MF_01227">
    <property type="entry name" value="PyrG"/>
    <property type="match status" value="1"/>
</dbReference>
<dbReference type="InterPro" id="IPR029062">
    <property type="entry name" value="Class_I_gatase-like"/>
</dbReference>
<dbReference type="InterPro" id="IPR004468">
    <property type="entry name" value="CTP_synthase"/>
</dbReference>
<dbReference type="InterPro" id="IPR017456">
    <property type="entry name" value="CTP_synthase_N"/>
</dbReference>
<dbReference type="InterPro" id="IPR017926">
    <property type="entry name" value="GATASE"/>
</dbReference>
<dbReference type="InterPro" id="IPR033828">
    <property type="entry name" value="GATase1_CTP_Synthase"/>
</dbReference>
<dbReference type="InterPro" id="IPR027417">
    <property type="entry name" value="P-loop_NTPase"/>
</dbReference>
<dbReference type="NCBIfam" id="NF003792">
    <property type="entry name" value="PRK05380.1"/>
    <property type="match status" value="1"/>
</dbReference>
<dbReference type="NCBIfam" id="TIGR00337">
    <property type="entry name" value="PyrG"/>
    <property type="match status" value="1"/>
</dbReference>
<dbReference type="PANTHER" id="PTHR11550">
    <property type="entry name" value="CTP SYNTHASE"/>
    <property type="match status" value="1"/>
</dbReference>
<dbReference type="PANTHER" id="PTHR11550:SF0">
    <property type="entry name" value="CTP SYNTHASE-RELATED"/>
    <property type="match status" value="1"/>
</dbReference>
<dbReference type="Pfam" id="PF06418">
    <property type="entry name" value="CTP_synth_N"/>
    <property type="match status" value="1"/>
</dbReference>
<dbReference type="Pfam" id="PF00117">
    <property type="entry name" value="GATase"/>
    <property type="match status" value="1"/>
</dbReference>
<dbReference type="SUPFAM" id="SSF52317">
    <property type="entry name" value="Class I glutamine amidotransferase-like"/>
    <property type="match status" value="1"/>
</dbReference>
<dbReference type="SUPFAM" id="SSF52540">
    <property type="entry name" value="P-loop containing nucleoside triphosphate hydrolases"/>
    <property type="match status" value="1"/>
</dbReference>
<dbReference type="PROSITE" id="PS51273">
    <property type="entry name" value="GATASE_TYPE_1"/>
    <property type="match status" value="1"/>
</dbReference>
<proteinExistence type="inferred from homology"/>
<reference key="1">
    <citation type="journal article" date="2008" name="J. Bacteriol.">
        <title>Genome sequence of the streptomycin-producing microorganism Streptomyces griseus IFO 13350.</title>
        <authorList>
            <person name="Ohnishi Y."/>
            <person name="Ishikawa J."/>
            <person name="Hara H."/>
            <person name="Suzuki H."/>
            <person name="Ikenoya M."/>
            <person name="Ikeda H."/>
            <person name="Yamashita A."/>
            <person name="Hattori M."/>
            <person name="Horinouchi S."/>
        </authorList>
    </citation>
    <scope>NUCLEOTIDE SEQUENCE [LARGE SCALE GENOMIC DNA]</scope>
    <source>
        <strain>JCM 4626 / CBS 651.72 / NBRC 13350 / KCC S-0626 / ISP 5235</strain>
    </source>
</reference>
<organism>
    <name type="scientific">Streptomyces griseus subsp. griseus (strain JCM 4626 / CBS 651.72 / NBRC 13350 / KCC S-0626 / ISP 5235)</name>
    <dbReference type="NCBI Taxonomy" id="455632"/>
    <lineage>
        <taxon>Bacteria</taxon>
        <taxon>Bacillati</taxon>
        <taxon>Actinomycetota</taxon>
        <taxon>Actinomycetes</taxon>
        <taxon>Kitasatosporales</taxon>
        <taxon>Streptomycetaceae</taxon>
        <taxon>Streptomyces</taxon>
    </lineage>
</organism>
<comment type="function">
    <text evidence="1">Catalyzes the ATP-dependent amination of UTP to CTP with either L-glutamine or ammonia as the source of nitrogen. Regulates intracellular CTP levels through interactions with the four ribonucleotide triphosphates.</text>
</comment>
<comment type="catalytic activity">
    <reaction evidence="1">
        <text>UTP + L-glutamine + ATP + H2O = CTP + L-glutamate + ADP + phosphate + 2 H(+)</text>
        <dbReference type="Rhea" id="RHEA:26426"/>
        <dbReference type="ChEBI" id="CHEBI:15377"/>
        <dbReference type="ChEBI" id="CHEBI:15378"/>
        <dbReference type="ChEBI" id="CHEBI:29985"/>
        <dbReference type="ChEBI" id="CHEBI:30616"/>
        <dbReference type="ChEBI" id="CHEBI:37563"/>
        <dbReference type="ChEBI" id="CHEBI:43474"/>
        <dbReference type="ChEBI" id="CHEBI:46398"/>
        <dbReference type="ChEBI" id="CHEBI:58359"/>
        <dbReference type="ChEBI" id="CHEBI:456216"/>
        <dbReference type="EC" id="6.3.4.2"/>
    </reaction>
</comment>
<comment type="catalytic activity">
    <reaction evidence="1">
        <text>L-glutamine + H2O = L-glutamate + NH4(+)</text>
        <dbReference type="Rhea" id="RHEA:15889"/>
        <dbReference type="ChEBI" id="CHEBI:15377"/>
        <dbReference type="ChEBI" id="CHEBI:28938"/>
        <dbReference type="ChEBI" id="CHEBI:29985"/>
        <dbReference type="ChEBI" id="CHEBI:58359"/>
    </reaction>
</comment>
<comment type="catalytic activity">
    <reaction evidence="1">
        <text>UTP + NH4(+) + ATP = CTP + ADP + phosphate + 2 H(+)</text>
        <dbReference type="Rhea" id="RHEA:16597"/>
        <dbReference type="ChEBI" id="CHEBI:15378"/>
        <dbReference type="ChEBI" id="CHEBI:28938"/>
        <dbReference type="ChEBI" id="CHEBI:30616"/>
        <dbReference type="ChEBI" id="CHEBI:37563"/>
        <dbReference type="ChEBI" id="CHEBI:43474"/>
        <dbReference type="ChEBI" id="CHEBI:46398"/>
        <dbReference type="ChEBI" id="CHEBI:456216"/>
    </reaction>
</comment>
<comment type="activity regulation">
    <text evidence="1">Allosterically activated by GTP, when glutamine is the substrate; GTP has no effect on the reaction when ammonia is the substrate. The allosteric effector GTP functions by stabilizing the protein conformation that binds the tetrahedral intermediate(s) formed during glutamine hydrolysis. Inhibited by the product CTP, via allosteric rather than competitive inhibition.</text>
</comment>
<comment type="pathway">
    <text evidence="1">Pyrimidine metabolism; CTP biosynthesis via de novo pathway; CTP from UDP: step 2/2.</text>
</comment>
<comment type="subunit">
    <text evidence="1">Homotetramer.</text>
</comment>
<comment type="miscellaneous">
    <text evidence="1">CTPSs have evolved a hybrid strategy for distinguishing between UTP and CTP. The overlapping regions of the product feedback inhibitory and substrate sites recognize a common feature in both compounds, the triphosphate moiety. To differentiate isosteric substrate and product pyrimidine rings, an additional pocket far from the expected kinase/ligase catalytic site, specifically recognizes the cytosine and ribose portions of the product inhibitor.</text>
</comment>
<comment type="similarity">
    <text evidence="1">Belongs to the CTP synthase family.</text>
</comment>
<gene>
    <name evidence="1" type="primary">pyrG</name>
    <name type="ordered locus">SGR_5721</name>
</gene>
<keyword id="KW-0067">ATP-binding</keyword>
<keyword id="KW-0315">Glutamine amidotransferase</keyword>
<keyword id="KW-0436">Ligase</keyword>
<keyword id="KW-0460">Magnesium</keyword>
<keyword id="KW-0479">Metal-binding</keyword>
<keyword id="KW-0547">Nucleotide-binding</keyword>
<keyword id="KW-0665">Pyrimidine biosynthesis</keyword>
<name>PYRG_STRGG</name>
<accession>B1W203</accession>
<feature type="chain" id="PRO_1000139589" description="CTP synthase">
    <location>
        <begin position="1"/>
        <end position="555"/>
    </location>
</feature>
<feature type="domain" description="Glutamine amidotransferase type-1" evidence="1">
    <location>
        <begin position="297"/>
        <end position="548"/>
    </location>
</feature>
<feature type="region of interest" description="Amidoligase domain" evidence="1">
    <location>
        <begin position="1"/>
        <end position="272"/>
    </location>
</feature>
<feature type="active site" description="Nucleophile; for glutamine hydrolysis" evidence="1">
    <location>
        <position position="387"/>
    </location>
</feature>
<feature type="active site" evidence="1">
    <location>
        <position position="521"/>
    </location>
</feature>
<feature type="active site" evidence="1">
    <location>
        <position position="523"/>
    </location>
</feature>
<feature type="binding site" evidence="1">
    <location>
        <position position="19"/>
    </location>
    <ligand>
        <name>CTP</name>
        <dbReference type="ChEBI" id="CHEBI:37563"/>
        <note>allosteric inhibitor</note>
    </ligand>
</feature>
<feature type="binding site" evidence="1">
    <location>
        <position position="19"/>
    </location>
    <ligand>
        <name>UTP</name>
        <dbReference type="ChEBI" id="CHEBI:46398"/>
    </ligand>
</feature>
<feature type="binding site" evidence="1">
    <location>
        <begin position="20"/>
        <end position="25"/>
    </location>
    <ligand>
        <name>ATP</name>
        <dbReference type="ChEBI" id="CHEBI:30616"/>
    </ligand>
</feature>
<feature type="binding site" evidence="1">
    <location>
        <position position="77"/>
    </location>
    <ligand>
        <name>ATP</name>
        <dbReference type="ChEBI" id="CHEBI:30616"/>
    </ligand>
</feature>
<feature type="binding site" evidence="1">
    <location>
        <position position="77"/>
    </location>
    <ligand>
        <name>Mg(2+)</name>
        <dbReference type="ChEBI" id="CHEBI:18420"/>
    </ligand>
</feature>
<feature type="binding site" evidence="1">
    <location>
        <position position="146"/>
    </location>
    <ligand>
        <name>Mg(2+)</name>
        <dbReference type="ChEBI" id="CHEBI:18420"/>
    </ligand>
</feature>
<feature type="binding site" evidence="1">
    <location>
        <begin position="153"/>
        <end position="155"/>
    </location>
    <ligand>
        <name>CTP</name>
        <dbReference type="ChEBI" id="CHEBI:37563"/>
        <note>allosteric inhibitor</note>
    </ligand>
</feature>
<feature type="binding site" evidence="1">
    <location>
        <begin position="193"/>
        <end position="198"/>
    </location>
    <ligand>
        <name>CTP</name>
        <dbReference type="ChEBI" id="CHEBI:37563"/>
        <note>allosteric inhibitor</note>
    </ligand>
</feature>
<feature type="binding site" evidence="1">
    <location>
        <begin position="193"/>
        <end position="198"/>
    </location>
    <ligand>
        <name>UTP</name>
        <dbReference type="ChEBI" id="CHEBI:46398"/>
    </ligand>
</feature>
<feature type="binding site" evidence="1">
    <location>
        <position position="229"/>
    </location>
    <ligand>
        <name>CTP</name>
        <dbReference type="ChEBI" id="CHEBI:37563"/>
        <note>allosteric inhibitor</note>
    </ligand>
</feature>
<feature type="binding site" evidence="1">
    <location>
        <position position="229"/>
    </location>
    <ligand>
        <name>UTP</name>
        <dbReference type="ChEBI" id="CHEBI:46398"/>
    </ligand>
</feature>
<feature type="binding site" evidence="1">
    <location>
        <position position="360"/>
    </location>
    <ligand>
        <name>L-glutamine</name>
        <dbReference type="ChEBI" id="CHEBI:58359"/>
    </ligand>
</feature>
<feature type="binding site" evidence="1">
    <location>
        <begin position="388"/>
        <end position="391"/>
    </location>
    <ligand>
        <name>L-glutamine</name>
        <dbReference type="ChEBI" id="CHEBI:58359"/>
    </ligand>
</feature>
<feature type="binding site" evidence="1">
    <location>
        <position position="411"/>
    </location>
    <ligand>
        <name>L-glutamine</name>
        <dbReference type="ChEBI" id="CHEBI:58359"/>
    </ligand>
</feature>
<feature type="binding site" evidence="1">
    <location>
        <position position="473"/>
    </location>
    <ligand>
        <name>L-glutamine</name>
        <dbReference type="ChEBI" id="CHEBI:58359"/>
    </ligand>
</feature>
<evidence type="ECO:0000255" key="1">
    <source>
        <dbReference type="HAMAP-Rule" id="MF_01227"/>
    </source>
</evidence>